<feature type="chain" id="PRO_0000159272" description="Thiosulfate reductase electron transfer subunit PhsB">
    <location>
        <begin position="1"/>
        <end position="192"/>
    </location>
</feature>
<feature type="domain" description="4Fe-4S ferredoxin-type 1" evidence="3">
    <location>
        <begin position="8"/>
        <end position="36"/>
    </location>
</feature>
<feature type="domain" description="4Fe-4S ferredoxin-type 2" evidence="3">
    <location>
        <begin position="55"/>
        <end position="86"/>
    </location>
</feature>
<feature type="domain" description="4Fe-4S ferredoxin-type 3" evidence="3">
    <location>
        <begin position="87"/>
        <end position="116"/>
    </location>
</feature>
<feature type="binding site" evidence="2">
    <location>
        <position position="17"/>
    </location>
    <ligand>
        <name>[4Fe-4S] cluster</name>
        <dbReference type="ChEBI" id="CHEBI:49883"/>
        <label>1</label>
    </ligand>
</feature>
<feature type="binding site" evidence="2">
    <location>
        <position position="20"/>
    </location>
    <ligand>
        <name>[4Fe-4S] cluster</name>
        <dbReference type="ChEBI" id="CHEBI:49883"/>
        <label>1</label>
    </ligand>
</feature>
<feature type="binding site" evidence="2">
    <location>
        <position position="23"/>
    </location>
    <ligand>
        <name>[4Fe-4S] cluster</name>
        <dbReference type="ChEBI" id="CHEBI:49883"/>
        <label>1</label>
    </ligand>
</feature>
<feature type="binding site" evidence="2">
    <location>
        <position position="27"/>
    </location>
    <ligand>
        <name>[4Fe-4S] cluster</name>
        <dbReference type="ChEBI" id="CHEBI:49883"/>
        <label>2</label>
    </ligand>
</feature>
<feature type="binding site" evidence="2">
    <location>
        <position position="64"/>
    </location>
    <ligand>
        <name>[4Fe-4S] cluster</name>
        <dbReference type="ChEBI" id="CHEBI:49883"/>
        <label>3</label>
    </ligand>
</feature>
<feature type="binding site" evidence="2">
    <location>
        <position position="67"/>
    </location>
    <ligand>
        <name>[4Fe-4S] cluster</name>
        <dbReference type="ChEBI" id="CHEBI:49883"/>
        <label>3</label>
    </ligand>
</feature>
<feature type="binding site" evidence="2">
    <location>
        <position position="72"/>
    </location>
    <ligand>
        <name>[4Fe-4S] cluster</name>
        <dbReference type="ChEBI" id="CHEBI:49883"/>
        <label>3</label>
    </ligand>
</feature>
<feature type="binding site" evidence="2">
    <location>
        <position position="76"/>
    </location>
    <ligand>
        <name>[4Fe-4S] cluster</name>
        <dbReference type="ChEBI" id="CHEBI:49883"/>
        <label>4</label>
    </ligand>
</feature>
<feature type="binding site" evidence="2">
    <location>
        <position position="96"/>
    </location>
    <ligand>
        <name>[4Fe-4S] cluster</name>
        <dbReference type="ChEBI" id="CHEBI:49883"/>
        <label>4</label>
    </ligand>
</feature>
<feature type="binding site" evidence="2">
    <location>
        <position position="99"/>
    </location>
    <ligand>
        <name>[4Fe-4S] cluster</name>
        <dbReference type="ChEBI" id="CHEBI:49883"/>
        <label>4</label>
    </ligand>
</feature>
<feature type="binding site" evidence="2">
    <location>
        <position position="102"/>
    </location>
    <ligand>
        <name>[4Fe-4S] cluster</name>
        <dbReference type="ChEBI" id="CHEBI:49883"/>
        <label>4</label>
    </ligand>
</feature>
<feature type="binding site" evidence="2">
    <location>
        <position position="106"/>
    </location>
    <ligand>
        <name>[4Fe-4S] cluster</name>
        <dbReference type="ChEBI" id="CHEBI:49883"/>
        <label>3</label>
    </ligand>
</feature>
<feature type="binding site" evidence="2">
    <location>
        <position position="123"/>
    </location>
    <ligand>
        <name>[4Fe-4S] cluster</name>
        <dbReference type="ChEBI" id="CHEBI:49883"/>
        <label>2</label>
    </ligand>
</feature>
<feature type="binding site" evidence="2">
    <location>
        <position position="126"/>
    </location>
    <ligand>
        <name>[4Fe-4S] cluster</name>
        <dbReference type="ChEBI" id="CHEBI:49883"/>
        <label>2</label>
    </ligand>
</feature>
<feature type="binding site" evidence="2">
    <location>
        <position position="139"/>
    </location>
    <ligand>
        <name>[4Fe-4S] cluster</name>
        <dbReference type="ChEBI" id="CHEBI:49883"/>
        <label>2</label>
    </ligand>
</feature>
<feature type="binding site" evidence="2">
    <location>
        <position position="143"/>
    </location>
    <ligand>
        <name>[4Fe-4S] cluster</name>
        <dbReference type="ChEBI" id="CHEBI:49883"/>
        <label>1</label>
    </ligand>
</feature>
<dbReference type="EMBL" id="AL513382">
    <property type="protein sequence ID" value="CAD02425.1"/>
    <property type="molecule type" value="Genomic_DNA"/>
</dbReference>
<dbReference type="EMBL" id="AE014613">
    <property type="protein sequence ID" value="AAO68500.1"/>
    <property type="molecule type" value="Genomic_DNA"/>
</dbReference>
<dbReference type="RefSeq" id="NP_456612.1">
    <property type="nucleotide sequence ID" value="NC_003198.1"/>
</dbReference>
<dbReference type="RefSeq" id="WP_001016236.1">
    <property type="nucleotide sequence ID" value="NZ_WSUR01000002.1"/>
</dbReference>
<dbReference type="SMR" id="P0A1I2"/>
<dbReference type="STRING" id="220341.gene:17586180"/>
<dbReference type="KEGG" id="stt:t0810"/>
<dbReference type="KEGG" id="sty:STY2270"/>
<dbReference type="PATRIC" id="fig|220341.7.peg.2289"/>
<dbReference type="eggNOG" id="COG0437">
    <property type="taxonomic scope" value="Bacteria"/>
</dbReference>
<dbReference type="HOGENOM" id="CLU_043374_1_3_6"/>
<dbReference type="OMA" id="PHLHFKY"/>
<dbReference type="OrthoDB" id="9779457at2"/>
<dbReference type="Proteomes" id="UP000000541">
    <property type="component" value="Chromosome"/>
</dbReference>
<dbReference type="Proteomes" id="UP000002670">
    <property type="component" value="Chromosome"/>
</dbReference>
<dbReference type="GO" id="GO:0005886">
    <property type="term" value="C:plasma membrane"/>
    <property type="evidence" value="ECO:0007669"/>
    <property type="project" value="UniProtKB-SubCell"/>
</dbReference>
<dbReference type="GO" id="GO:0051539">
    <property type="term" value="F:4 iron, 4 sulfur cluster binding"/>
    <property type="evidence" value="ECO:0007669"/>
    <property type="project" value="UniProtKB-KW"/>
</dbReference>
<dbReference type="GO" id="GO:0046872">
    <property type="term" value="F:metal ion binding"/>
    <property type="evidence" value="ECO:0007669"/>
    <property type="project" value="UniProtKB-KW"/>
</dbReference>
<dbReference type="CDD" id="cd10551">
    <property type="entry name" value="PsrB"/>
    <property type="match status" value="1"/>
</dbReference>
<dbReference type="FunFam" id="3.30.70.20:FF:000014">
    <property type="entry name" value="Cytochrome c nitrite reductase, Fe-S protein"/>
    <property type="match status" value="1"/>
</dbReference>
<dbReference type="Gene3D" id="3.30.70.20">
    <property type="match status" value="2"/>
</dbReference>
<dbReference type="InterPro" id="IPR017896">
    <property type="entry name" value="4Fe4S_Fe-S-bd"/>
</dbReference>
<dbReference type="InterPro" id="IPR017900">
    <property type="entry name" value="4Fe4S_Fe_S_CS"/>
</dbReference>
<dbReference type="InterPro" id="IPR050954">
    <property type="entry name" value="ET_IronSulfur_Cluster-Binding"/>
</dbReference>
<dbReference type="PANTHER" id="PTHR43177">
    <property type="entry name" value="PROTEIN NRFC"/>
    <property type="match status" value="1"/>
</dbReference>
<dbReference type="PANTHER" id="PTHR43177:SF3">
    <property type="entry name" value="PROTEIN NRFC HOMOLOG"/>
    <property type="match status" value="1"/>
</dbReference>
<dbReference type="Pfam" id="PF13247">
    <property type="entry name" value="Fer4_11"/>
    <property type="match status" value="1"/>
</dbReference>
<dbReference type="Pfam" id="PF12797">
    <property type="entry name" value="Fer4_2"/>
    <property type="match status" value="1"/>
</dbReference>
<dbReference type="SUPFAM" id="SSF54862">
    <property type="entry name" value="4Fe-4S ferredoxins"/>
    <property type="match status" value="1"/>
</dbReference>
<dbReference type="PROSITE" id="PS00198">
    <property type="entry name" value="4FE4S_FER_1"/>
    <property type="match status" value="1"/>
</dbReference>
<dbReference type="PROSITE" id="PS51379">
    <property type="entry name" value="4FE4S_FER_2"/>
    <property type="match status" value="3"/>
</dbReference>
<comment type="function">
    <text evidence="1">Component of the PhsABC thiosulfate reductase that catalyzes the reduction of thiosulfate to sulfite and hydrogen sulfide, with menaquinol as the sole electron donor. Proton motive force (PMF) is required to drive transmembrane electron transfer within the reductase. The PhsB subunit transfers electrons between PhsC and PhsA.</text>
</comment>
<comment type="cofactor">
    <cofactor evidence="2">
        <name>[4Fe-4S] cluster</name>
        <dbReference type="ChEBI" id="CHEBI:49883"/>
    </cofactor>
    <text evidence="2">Binds 4 [4Fe-4S] clusters per subunit.</text>
</comment>
<comment type="subunit">
    <text evidence="1">Composed of three subunits: PhsA, PhsB and PhsC.</text>
</comment>
<comment type="subcellular location">
    <subcellularLocation>
        <location evidence="1">Cell inner membrane</location>
        <topology evidence="1">Peripheral membrane protein</topology>
        <orientation evidence="1">Periplasmic side</orientation>
    </subcellularLocation>
</comment>
<gene>
    <name type="primary">phsB</name>
    <name type="ordered locus">STY2270</name>
    <name type="ordered locus">t0810</name>
</gene>
<protein>
    <recommendedName>
        <fullName evidence="1">Thiosulfate reductase electron transfer subunit PhsB</fullName>
    </recommendedName>
    <alternativeName>
        <fullName evidence="1">Thiosulfate reductase subunit beta</fullName>
    </alternativeName>
</protein>
<evidence type="ECO:0000250" key="1">
    <source>
        <dbReference type="UniProtKB" id="P0A1I1"/>
    </source>
</evidence>
<evidence type="ECO:0000250" key="2">
    <source>
        <dbReference type="UniProtKB" id="P0AAJ3"/>
    </source>
</evidence>
<evidence type="ECO:0000255" key="3">
    <source>
        <dbReference type="PROSITE-ProRule" id="PRU00711"/>
    </source>
</evidence>
<organism>
    <name type="scientific">Salmonella typhi</name>
    <dbReference type="NCBI Taxonomy" id="90370"/>
    <lineage>
        <taxon>Bacteria</taxon>
        <taxon>Pseudomonadati</taxon>
        <taxon>Pseudomonadota</taxon>
        <taxon>Gammaproteobacteria</taxon>
        <taxon>Enterobacterales</taxon>
        <taxon>Enterobacteriaceae</taxon>
        <taxon>Salmonella</taxon>
    </lineage>
</organism>
<keyword id="KW-0004">4Fe-4S</keyword>
<keyword id="KW-0997">Cell inner membrane</keyword>
<keyword id="KW-1003">Cell membrane</keyword>
<keyword id="KW-0249">Electron transport</keyword>
<keyword id="KW-0408">Iron</keyword>
<keyword id="KW-0411">Iron-sulfur</keyword>
<keyword id="KW-0472">Membrane</keyword>
<keyword id="KW-0479">Metal-binding</keyword>
<keyword id="KW-0677">Repeat</keyword>
<keyword id="KW-0813">Transport</keyword>
<reference key="1">
    <citation type="journal article" date="2001" name="Nature">
        <title>Complete genome sequence of a multiple drug resistant Salmonella enterica serovar Typhi CT18.</title>
        <authorList>
            <person name="Parkhill J."/>
            <person name="Dougan G."/>
            <person name="James K.D."/>
            <person name="Thomson N.R."/>
            <person name="Pickard D."/>
            <person name="Wain J."/>
            <person name="Churcher C.M."/>
            <person name="Mungall K.L."/>
            <person name="Bentley S.D."/>
            <person name="Holden M.T.G."/>
            <person name="Sebaihia M."/>
            <person name="Baker S."/>
            <person name="Basham D."/>
            <person name="Brooks K."/>
            <person name="Chillingworth T."/>
            <person name="Connerton P."/>
            <person name="Cronin A."/>
            <person name="Davis P."/>
            <person name="Davies R.M."/>
            <person name="Dowd L."/>
            <person name="White N."/>
            <person name="Farrar J."/>
            <person name="Feltwell T."/>
            <person name="Hamlin N."/>
            <person name="Haque A."/>
            <person name="Hien T.T."/>
            <person name="Holroyd S."/>
            <person name="Jagels K."/>
            <person name="Krogh A."/>
            <person name="Larsen T.S."/>
            <person name="Leather S."/>
            <person name="Moule S."/>
            <person name="O'Gaora P."/>
            <person name="Parry C."/>
            <person name="Quail M.A."/>
            <person name="Rutherford K.M."/>
            <person name="Simmonds M."/>
            <person name="Skelton J."/>
            <person name="Stevens K."/>
            <person name="Whitehead S."/>
            <person name="Barrell B.G."/>
        </authorList>
    </citation>
    <scope>NUCLEOTIDE SEQUENCE [LARGE SCALE GENOMIC DNA]</scope>
    <source>
        <strain>CT18</strain>
    </source>
</reference>
<reference key="2">
    <citation type="journal article" date="2003" name="J. Bacteriol.">
        <title>Comparative genomics of Salmonella enterica serovar Typhi strains Ty2 and CT18.</title>
        <authorList>
            <person name="Deng W."/>
            <person name="Liou S.-R."/>
            <person name="Plunkett G. III"/>
            <person name="Mayhew G.F."/>
            <person name="Rose D.J."/>
            <person name="Burland V."/>
            <person name="Kodoyianni V."/>
            <person name="Schwartz D.C."/>
            <person name="Blattner F.R."/>
        </authorList>
    </citation>
    <scope>NUCLEOTIDE SEQUENCE [LARGE SCALE GENOMIC DNA]</scope>
    <source>
        <strain>ATCC 700931 / Ty2</strain>
    </source>
</reference>
<proteinExistence type="inferred from homology"/>
<name>PHSB_SALTI</name>
<sequence length="192" mass="21320">MNHLTNQYVMLHDEKRCIGCQACTVACKVLNDVPEGFSRVQVQIRAPEQASNALTHFQFVRVSCQHCENAPCVSVCPTGASYRDENGIVQVDKSRCIGCDYCVAACPFHVRYLNPQTGVADKCNFCADTRLAAGQSPACVSVCPTDALKFGRLDESEIQRWVGQKEVYRQQEARSGAVSLYRRKEVHQEGKA</sequence>
<accession>P0A1I2</accession>
<accession>P37601</accession>